<protein>
    <recommendedName>
        <fullName>DNA ligase 4</fullName>
        <ecNumber evidence="2">6.5.1.1</ecNumber>
    </recommendedName>
    <alternativeName>
        <fullName>DNA ligase IV</fullName>
    </alternativeName>
    <alternativeName>
        <fullName>Polydeoxyribonucleotide synthase [ATP] 4</fullName>
    </alternativeName>
</protein>
<dbReference type="EC" id="6.5.1.1" evidence="2"/>
<dbReference type="EMBL" id="CH445341">
    <property type="protein sequence ID" value="EAT81919.1"/>
    <property type="molecule type" value="Genomic_DNA"/>
</dbReference>
<dbReference type="RefSeq" id="XP_001800794.1">
    <property type="nucleotide sequence ID" value="XM_001800742.1"/>
</dbReference>
<dbReference type="SMR" id="Q0UCI9"/>
<dbReference type="FunCoup" id="Q0UCI9">
    <property type="interactions" value="550"/>
</dbReference>
<dbReference type="STRING" id="321614.Q0UCI9"/>
<dbReference type="EnsemblFungi" id="SNOT_10525">
    <property type="protein sequence ID" value="SNOT_10525"/>
    <property type="gene ID" value="SNOG_10525"/>
</dbReference>
<dbReference type="GeneID" id="5977701"/>
<dbReference type="KEGG" id="pno:SNOG_10525"/>
<dbReference type="VEuPathDB" id="FungiDB:JI435_105250"/>
<dbReference type="eggNOG" id="KOG0966">
    <property type="taxonomic scope" value="Eukaryota"/>
</dbReference>
<dbReference type="HOGENOM" id="CLU_004844_1_1_1"/>
<dbReference type="InParanoid" id="Q0UCI9"/>
<dbReference type="OMA" id="EGIMIKH"/>
<dbReference type="OrthoDB" id="151490at2759"/>
<dbReference type="Proteomes" id="UP000001055">
    <property type="component" value="Unassembled WGS sequence"/>
</dbReference>
<dbReference type="GO" id="GO:0000785">
    <property type="term" value="C:chromatin"/>
    <property type="evidence" value="ECO:0007669"/>
    <property type="project" value="EnsemblFungi"/>
</dbReference>
<dbReference type="GO" id="GO:0032807">
    <property type="term" value="C:DNA ligase IV complex"/>
    <property type="evidence" value="ECO:0000318"/>
    <property type="project" value="GO_Central"/>
</dbReference>
<dbReference type="GO" id="GO:0005730">
    <property type="term" value="C:nucleolus"/>
    <property type="evidence" value="ECO:0007669"/>
    <property type="project" value="EnsemblFungi"/>
</dbReference>
<dbReference type="GO" id="GO:0005524">
    <property type="term" value="F:ATP binding"/>
    <property type="evidence" value="ECO:0000318"/>
    <property type="project" value="GO_Central"/>
</dbReference>
<dbReference type="GO" id="GO:0003677">
    <property type="term" value="F:DNA binding"/>
    <property type="evidence" value="ECO:0000318"/>
    <property type="project" value="GO_Central"/>
</dbReference>
<dbReference type="GO" id="GO:0003910">
    <property type="term" value="F:DNA ligase (ATP) activity"/>
    <property type="evidence" value="ECO:0000250"/>
    <property type="project" value="UniProtKB"/>
</dbReference>
<dbReference type="GO" id="GO:0046872">
    <property type="term" value="F:metal ion binding"/>
    <property type="evidence" value="ECO:0007669"/>
    <property type="project" value="UniProtKB-KW"/>
</dbReference>
<dbReference type="GO" id="GO:0071897">
    <property type="term" value="P:DNA biosynthetic process"/>
    <property type="evidence" value="ECO:0007669"/>
    <property type="project" value="InterPro"/>
</dbReference>
<dbReference type="GO" id="GO:0006310">
    <property type="term" value="P:DNA recombination"/>
    <property type="evidence" value="ECO:0007669"/>
    <property type="project" value="UniProtKB-KW"/>
</dbReference>
<dbReference type="GO" id="GO:0097680">
    <property type="term" value="P:double-strand break repair via classical nonhomologous end joining"/>
    <property type="evidence" value="ECO:0000250"/>
    <property type="project" value="UniProtKB"/>
</dbReference>
<dbReference type="GO" id="GO:0006303">
    <property type="term" value="P:double-strand break repair via nonhomologous end joining"/>
    <property type="evidence" value="ECO:0000318"/>
    <property type="project" value="GO_Central"/>
</dbReference>
<dbReference type="GO" id="GO:0006297">
    <property type="term" value="P:nucleotide-excision repair, DNA gap filling"/>
    <property type="evidence" value="ECO:0000318"/>
    <property type="project" value="GO_Central"/>
</dbReference>
<dbReference type="CDD" id="cd07903">
    <property type="entry name" value="Adenylation_DNA_ligase_IV"/>
    <property type="match status" value="1"/>
</dbReference>
<dbReference type="CDD" id="cd17722">
    <property type="entry name" value="BRCT_DNA_ligase_IV_rpt1"/>
    <property type="match status" value="1"/>
</dbReference>
<dbReference type="CDD" id="cd17715">
    <property type="entry name" value="BRCT_polymerase_lambda"/>
    <property type="match status" value="1"/>
</dbReference>
<dbReference type="CDD" id="cd07968">
    <property type="entry name" value="OBF_DNA_ligase_IV"/>
    <property type="match status" value="1"/>
</dbReference>
<dbReference type="FunFam" id="2.40.50.140:FF:000234">
    <property type="entry name" value="DNA ligase"/>
    <property type="match status" value="1"/>
</dbReference>
<dbReference type="FunFam" id="3.30.470.30:FF:000013">
    <property type="entry name" value="DNA ligase"/>
    <property type="match status" value="1"/>
</dbReference>
<dbReference type="FunFam" id="1.10.3260.10:FF:000008">
    <property type="entry name" value="DNA ligase 4"/>
    <property type="match status" value="1"/>
</dbReference>
<dbReference type="Gene3D" id="3.40.50.10190">
    <property type="entry name" value="BRCT domain"/>
    <property type="match status" value="2"/>
</dbReference>
<dbReference type="Gene3D" id="1.10.3260.10">
    <property type="entry name" value="DNA ligase, ATP-dependent, N-terminal domain"/>
    <property type="match status" value="1"/>
</dbReference>
<dbReference type="Gene3D" id="3.30.470.30">
    <property type="entry name" value="DNA ligase/mRNA capping enzyme"/>
    <property type="match status" value="1"/>
</dbReference>
<dbReference type="Gene3D" id="2.40.50.140">
    <property type="entry name" value="Nucleic acid-binding proteins"/>
    <property type="match status" value="1"/>
</dbReference>
<dbReference type="InterPro" id="IPR044125">
    <property type="entry name" value="Adenylation_DNA_ligase_IV"/>
</dbReference>
<dbReference type="InterPro" id="IPR001357">
    <property type="entry name" value="BRCT_dom"/>
</dbReference>
<dbReference type="InterPro" id="IPR036420">
    <property type="entry name" value="BRCT_dom_sf"/>
</dbReference>
<dbReference type="InterPro" id="IPR000977">
    <property type="entry name" value="DNA_ligase_ATP-dep"/>
</dbReference>
<dbReference type="InterPro" id="IPR012309">
    <property type="entry name" value="DNA_ligase_ATP-dep_C"/>
</dbReference>
<dbReference type="InterPro" id="IPR012310">
    <property type="entry name" value="DNA_ligase_ATP-dep_cent"/>
</dbReference>
<dbReference type="InterPro" id="IPR016059">
    <property type="entry name" value="DNA_ligase_ATP-dep_CS"/>
</dbReference>
<dbReference type="InterPro" id="IPR012308">
    <property type="entry name" value="DNA_ligase_ATP-dep_N"/>
</dbReference>
<dbReference type="InterPro" id="IPR036599">
    <property type="entry name" value="DNA_ligase_N_sf"/>
</dbReference>
<dbReference type="InterPro" id="IPR029710">
    <property type="entry name" value="LIG4"/>
</dbReference>
<dbReference type="InterPro" id="IPR012340">
    <property type="entry name" value="NA-bd_OB-fold"/>
</dbReference>
<dbReference type="NCBIfam" id="TIGR00574">
    <property type="entry name" value="dnl1"/>
    <property type="match status" value="1"/>
</dbReference>
<dbReference type="PANTHER" id="PTHR45997">
    <property type="entry name" value="DNA LIGASE 4"/>
    <property type="match status" value="1"/>
</dbReference>
<dbReference type="PANTHER" id="PTHR45997:SF1">
    <property type="entry name" value="DNA LIGASE 4"/>
    <property type="match status" value="1"/>
</dbReference>
<dbReference type="Pfam" id="PF16589">
    <property type="entry name" value="BRCT_2"/>
    <property type="match status" value="1"/>
</dbReference>
<dbReference type="Pfam" id="PF04679">
    <property type="entry name" value="DNA_ligase_A_C"/>
    <property type="match status" value="1"/>
</dbReference>
<dbReference type="Pfam" id="PF01068">
    <property type="entry name" value="DNA_ligase_A_M"/>
    <property type="match status" value="1"/>
</dbReference>
<dbReference type="Pfam" id="PF04675">
    <property type="entry name" value="DNA_ligase_A_N"/>
    <property type="match status" value="1"/>
</dbReference>
<dbReference type="SUPFAM" id="SSF117018">
    <property type="entry name" value="ATP-dependent DNA ligase DNA-binding domain"/>
    <property type="match status" value="1"/>
</dbReference>
<dbReference type="SUPFAM" id="SSF52113">
    <property type="entry name" value="BRCT domain"/>
    <property type="match status" value="2"/>
</dbReference>
<dbReference type="SUPFAM" id="SSF56091">
    <property type="entry name" value="DNA ligase/mRNA capping enzyme, catalytic domain"/>
    <property type="match status" value="1"/>
</dbReference>
<dbReference type="SUPFAM" id="SSF50249">
    <property type="entry name" value="Nucleic acid-binding proteins"/>
    <property type="match status" value="1"/>
</dbReference>
<dbReference type="PROSITE" id="PS50172">
    <property type="entry name" value="BRCT"/>
    <property type="match status" value="2"/>
</dbReference>
<dbReference type="PROSITE" id="PS00697">
    <property type="entry name" value="DNA_LIGASE_A1"/>
    <property type="match status" value="1"/>
</dbReference>
<dbReference type="PROSITE" id="PS50160">
    <property type="entry name" value="DNA_LIGASE_A3"/>
    <property type="match status" value="1"/>
</dbReference>
<keyword id="KW-0067">ATP-binding</keyword>
<keyword id="KW-0227">DNA damage</keyword>
<keyword id="KW-0233">DNA recombination</keyword>
<keyword id="KW-0234">DNA repair</keyword>
<keyword id="KW-0436">Ligase</keyword>
<keyword id="KW-0460">Magnesium</keyword>
<keyword id="KW-0479">Metal-binding</keyword>
<keyword id="KW-0547">Nucleotide-binding</keyword>
<keyword id="KW-0539">Nucleus</keyword>
<keyword id="KW-0677">Repeat</keyword>
<evidence type="ECO:0000250" key="1">
    <source>
        <dbReference type="UniProtKB" id="P49917"/>
    </source>
</evidence>
<evidence type="ECO:0000250" key="2">
    <source>
        <dbReference type="UniProtKB" id="Q08387"/>
    </source>
</evidence>
<evidence type="ECO:0000255" key="3"/>
<evidence type="ECO:0000255" key="4">
    <source>
        <dbReference type="PROSITE-ProRule" id="PRU00033"/>
    </source>
</evidence>
<evidence type="ECO:0000255" key="5">
    <source>
        <dbReference type="PROSITE-ProRule" id="PRU10135"/>
    </source>
</evidence>
<evidence type="ECO:0000256" key="6">
    <source>
        <dbReference type="SAM" id="MobiDB-lite"/>
    </source>
</evidence>
<evidence type="ECO:0000305" key="7"/>
<comment type="function">
    <text evidence="2">DNA ligase involved in DNA non-homologous end joining (NHEJ); required for double-strand break (DSB) repair.</text>
</comment>
<comment type="catalytic activity">
    <reaction evidence="5">
        <text>ATP + (deoxyribonucleotide)n-3'-hydroxyl + 5'-phospho-(deoxyribonucleotide)m = (deoxyribonucleotide)n+m + AMP + diphosphate.</text>
        <dbReference type="EC" id="6.5.1.1"/>
    </reaction>
</comment>
<comment type="cofactor">
    <cofactor evidence="1">
        <name>Mg(2+)</name>
        <dbReference type="ChEBI" id="CHEBI:18420"/>
    </cofactor>
</comment>
<comment type="subcellular location">
    <subcellularLocation>
        <location evidence="2">Nucleus</location>
    </subcellularLocation>
</comment>
<comment type="similarity">
    <text evidence="7">Belongs to the ATP-dependent DNA ligase family.</text>
</comment>
<organism>
    <name type="scientific">Phaeosphaeria nodorum (strain SN15 / ATCC MYA-4574 / FGSC 10173)</name>
    <name type="common">Glume blotch fungus</name>
    <name type="synonym">Parastagonospora nodorum</name>
    <dbReference type="NCBI Taxonomy" id="321614"/>
    <lineage>
        <taxon>Eukaryota</taxon>
        <taxon>Fungi</taxon>
        <taxon>Dikarya</taxon>
        <taxon>Ascomycota</taxon>
        <taxon>Pezizomycotina</taxon>
        <taxon>Dothideomycetes</taxon>
        <taxon>Pleosporomycetidae</taxon>
        <taxon>Pleosporales</taxon>
        <taxon>Pleosporineae</taxon>
        <taxon>Phaeosphaeriaceae</taxon>
        <taxon>Parastagonospora</taxon>
    </lineage>
</organism>
<proteinExistence type="inferred from homology"/>
<gene>
    <name type="primary">LIG4</name>
    <name type="ORF">SNOG_10525</name>
</gene>
<feature type="chain" id="PRO_0000278385" description="DNA ligase 4">
    <location>
        <begin position="1"/>
        <end position="990"/>
    </location>
</feature>
<feature type="domain" description="BRCT 1" evidence="4">
    <location>
        <begin position="728"/>
        <end position="821"/>
    </location>
</feature>
<feature type="domain" description="BRCT 2" evidence="4">
    <location>
        <begin position="900"/>
        <end position="989"/>
    </location>
</feature>
<feature type="region of interest" description="Disordered" evidence="6">
    <location>
        <begin position="57"/>
        <end position="84"/>
    </location>
</feature>
<feature type="active site" description="N6-AMP-lysine intermediate" evidence="5">
    <location>
        <position position="326"/>
    </location>
</feature>
<feature type="binding site" evidence="1">
    <location>
        <position position="324"/>
    </location>
    <ligand>
        <name>ATP</name>
        <dbReference type="ChEBI" id="CHEBI:30616"/>
    </ligand>
</feature>
<feature type="binding site" evidence="1">
    <location>
        <position position="326"/>
    </location>
    <ligand>
        <name>ATP</name>
        <dbReference type="ChEBI" id="CHEBI:30616"/>
    </ligand>
</feature>
<feature type="binding site" evidence="1">
    <location>
        <position position="327"/>
    </location>
    <ligand>
        <name>ATP</name>
        <dbReference type="ChEBI" id="CHEBI:30616"/>
    </ligand>
</feature>
<feature type="binding site" evidence="1">
    <location>
        <position position="331"/>
    </location>
    <ligand>
        <name>ATP</name>
        <dbReference type="ChEBI" id="CHEBI:30616"/>
    </ligand>
</feature>
<feature type="binding site" evidence="1">
    <location>
        <position position="394"/>
    </location>
    <ligand>
        <name>ATP</name>
        <dbReference type="ChEBI" id="CHEBI:30616"/>
    </ligand>
</feature>
<feature type="binding site" evidence="3">
    <location>
        <position position="394"/>
    </location>
    <ligand>
        <name>Mg(2+)</name>
        <dbReference type="ChEBI" id="CHEBI:18420"/>
        <label>1</label>
    </ligand>
</feature>
<feature type="binding site" evidence="1">
    <location>
        <position position="436"/>
    </location>
    <ligand>
        <name>ATP</name>
        <dbReference type="ChEBI" id="CHEBI:30616"/>
    </ligand>
</feature>
<feature type="binding site" evidence="1">
    <location>
        <position position="496"/>
    </location>
    <ligand>
        <name>ATP</name>
        <dbReference type="ChEBI" id="CHEBI:30616"/>
    </ligand>
</feature>
<feature type="binding site" evidence="3">
    <location>
        <position position="496"/>
    </location>
    <ligand>
        <name>Mg(2+)</name>
        <dbReference type="ChEBI" id="CHEBI:18420"/>
        <label>2</label>
    </ligand>
</feature>
<feature type="binding site" evidence="1">
    <location>
        <position position="501"/>
    </location>
    <ligand>
        <name>ATP</name>
        <dbReference type="ChEBI" id="CHEBI:30616"/>
    </ligand>
</feature>
<feature type="binding site" evidence="1">
    <location>
        <position position="518"/>
    </location>
    <ligand>
        <name>ATP</name>
        <dbReference type="ChEBI" id="CHEBI:30616"/>
    </ligand>
</feature>
<feature type="binding site" evidence="1">
    <location>
        <position position="520"/>
    </location>
    <ligand>
        <name>ATP</name>
        <dbReference type="ChEBI" id="CHEBI:30616"/>
    </ligand>
</feature>
<reference key="1">
    <citation type="journal article" date="2007" name="Plant Cell">
        <title>Dothideomycete-plant interactions illuminated by genome sequencing and EST analysis of the wheat pathogen Stagonospora nodorum.</title>
        <authorList>
            <person name="Hane J.K."/>
            <person name="Lowe R.G.T."/>
            <person name="Solomon P.S."/>
            <person name="Tan K.-C."/>
            <person name="Schoch C.L."/>
            <person name="Spatafora J.W."/>
            <person name="Crous P.W."/>
            <person name="Kodira C.D."/>
            <person name="Birren B.W."/>
            <person name="Galagan J.E."/>
            <person name="Torriani S.F.F."/>
            <person name="McDonald B.A."/>
            <person name="Oliver R.P."/>
        </authorList>
    </citation>
    <scope>NUCLEOTIDE SEQUENCE [LARGE SCALE GENOMIC DNA]</scope>
    <source>
        <strain>SN15 / ATCC MYA-4574 / FGSC 10173</strain>
    </source>
</reference>
<accession>Q0UCI9</accession>
<sequence>MAEDTEMPDAEAVRENTLMYGHDDELDEKFPTRPMNLHKSPPFHTLFTDLFDPLMETQKKGRQPPGPRRKAGPHGHSNLSPHEAKRNIIERFIASWRKTVGNDFYPAMRLIIPDKDRDRAMYGLKEKAIAKVLIKLTKISKDSDDAKQMLNWKLPGQLHKASASTAGDFAGRCYQVLSSRQLNTKLGDMSIAEVNNALDKLSQLGSEDEQVKIFQRFNRRMNAEEMTWLIRIILRQMKIGATEKTFLDIWHPDAETLFNISSNLRRVCWELYDPKVRLEGEDTGLSLMQCFQPQLAAFQDKGGSFEKIVARLQANSDDDSFWIEEKLDGERMQLHMIEDPEAPGGKLFGFWSRKAKDYAYLYGKHLQGDEAGALTRFITDAFGKNVRNIILDGEMITWDMDVDHIVGFGTLKTAAISEKENKTDKSTGQRPLFRVFDCVYLNDKLLTPYTLRDRRRALESAVKDVKRRLEIHPYIEAHSHTEIEPALRKVVAESSEGLVLKNPRSMYRLNDRNADWMKVKPEYMSEFGESLDCIVVGGYFGSGHRGGAHSSFLCALLLNKDAKPGDADYEKCWSFFKVGGGFSREDYAAIRGRTEGKWKDWDPRRPPPIIELGGHEQNRQHERPDQWIHPSDSVVLECKAASVEGSDKFRFNLTLRFPRFRMLRTDKRWDQALSREEFYEIKANVEYKREEKEKEFEIEKSRRKRTRTTKKPIVVAGSETITTPYAGPQSKIFDGLSFYIMTEQLHPTKKSKVDLEALVKANGGRVVQRDSMEPNLVIVADKRLIKVASLEKRDTNNIVKPVWIQDTIQQNEVDNGALPYLLPFEPNRHMFYLLGDNQLDYEANADDYGDSYARDIADVEEMRKILGATDPPQKRTKFDRESFLDQLEDHGDSLSHLKTYMFSSTKVAFRTSDDPVWTLRAQLAGNYIRFGGGQITEDEDEEGVTHTVVPDGQTASVSRVADLSRVVGVGWVQKCWDESTRLDEERYQWG</sequence>
<name>DNLI4_PHANO</name>